<name>SODF_TETPY</name>
<comment type="function">
    <text>Destroys superoxide anion radicals which are normally produced within the cells and which are toxic to biological systems.</text>
</comment>
<comment type="catalytic activity">
    <reaction>
        <text>2 superoxide + 2 H(+) = H2O2 + O2</text>
        <dbReference type="Rhea" id="RHEA:20696"/>
        <dbReference type="ChEBI" id="CHEBI:15378"/>
        <dbReference type="ChEBI" id="CHEBI:15379"/>
        <dbReference type="ChEBI" id="CHEBI:16240"/>
        <dbReference type="ChEBI" id="CHEBI:18421"/>
        <dbReference type="EC" id="1.15.1.1"/>
    </reaction>
</comment>
<comment type="cofactor">
    <cofactor evidence="1">
        <name>Fe cation</name>
        <dbReference type="ChEBI" id="CHEBI:24875"/>
    </cofactor>
    <text evidence="1">Binds 1 Fe cation per subunit.</text>
</comment>
<comment type="subunit">
    <text>Homotetramer.</text>
</comment>
<comment type="similarity">
    <text evidence="2">Belongs to the iron/manganese superoxide dismutase family.</text>
</comment>
<evidence type="ECO:0000250" key="1"/>
<evidence type="ECO:0000305" key="2"/>
<sequence length="196" mass="22657">LNYEYSDLEPVLSAHLLSFHHGKHHQAYVNNLNATYEQIAAATKENDAHKIATLQSALRFNLGGHVNHWIYWDNLAPVKSGGGVLPDEHSPLTKAIKEKWGSYENFITLFNTRTAAIQGSGWGWLGYDTVSKSLRLFELGNQDMPEWSSIVPLLTIDVWEHAYYLDYQNLRPKYLTEVWKIVNWREVEKRYLQAIE</sequence>
<keyword id="KW-0903">Direct protein sequencing</keyword>
<keyword id="KW-0408">Iron</keyword>
<keyword id="KW-0479">Metal-binding</keyword>
<keyword id="KW-0560">Oxidoreductase</keyword>
<proteinExistence type="evidence at protein level"/>
<dbReference type="EC" id="1.15.1.1"/>
<dbReference type="PIR" id="A39223">
    <property type="entry name" value="A39223"/>
</dbReference>
<dbReference type="SMR" id="P19666"/>
<dbReference type="GO" id="GO:0005739">
    <property type="term" value="C:mitochondrion"/>
    <property type="evidence" value="ECO:0007669"/>
    <property type="project" value="TreeGrafter"/>
</dbReference>
<dbReference type="GO" id="GO:0030145">
    <property type="term" value="F:manganese ion binding"/>
    <property type="evidence" value="ECO:0007669"/>
    <property type="project" value="TreeGrafter"/>
</dbReference>
<dbReference type="GO" id="GO:0004784">
    <property type="term" value="F:superoxide dismutase activity"/>
    <property type="evidence" value="ECO:0007669"/>
    <property type="project" value="UniProtKB-EC"/>
</dbReference>
<dbReference type="FunFam" id="1.10.287.990:FF:000001">
    <property type="entry name" value="Superoxide dismutase"/>
    <property type="match status" value="1"/>
</dbReference>
<dbReference type="FunFam" id="3.55.40.20:FF:000004">
    <property type="entry name" value="Superoxide dismutase [Fe]"/>
    <property type="match status" value="1"/>
</dbReference>
<dbReference type="Gene3D" id="1.10.287.990">
    <property type="entry name" value="Fe,Mn superoxide dismutase (SOD) domain"/>
    <property type="match status" value="1"/>
</dbReference>
<dbReference type="Gene3D" id="3.55.40.20">
    <property type="entry name" value="Iron/manganese superoxide dismutase, C-terminal domain"/>
    <property type="match status" value="1"/>
</dbReference>
<dbReference type="InterPro" id="IPR050265">
    <property type="entry name" value="Fe/Mn_Superoxide_Dismutase"/>
</dbReference>
<dbReference type="InterPro" id="IPR001189">
    <property type="entry name" value="Mn/Fe_SOD"/>
</dbReference>
<dbReference type="InterPro" id="IPR019833">
    <property type="entry name" value="Mn/Fe_SOD_BS"/>
</dbReference>
<dbReference type="InterPro" id="IPR019832">
    <property type="entry name" value="Mn/Fe_SOD_C"/>
</dbReference>
<dbReference type="InterPro" id="IPR019831">
    <property type="entry name" value="Mn/Fe_SOD_N"/>
</dbReference>
<dbReference type="InterPro" id="IPR036324">
    <property type="entry name" value="Mn/Fe_SOD_N_sf"/>
</dbReference>
<dbReference type="InterPro" id="IPR036314">
    <property type="entry name" value="SOD_C_sf"/>
</dbReference>
<dbReference type="PANTHER" id="PTHR11404">
    <property type="entry name" value="SUPEROXIDE DISMUTASE 2"/>
    <property type="match status" value="1"/>
</dbReference>
<dbReference type="PANTHER" id="PTHR11404:SF6">
    <property type="entry name" value="SUPEROXIDE DISMUTASE [MN], MITOCHONDRIAL"/>
    <property type="match status" value="1"/>
</dbReference>
<dbReference type="Pfam" id="PF02777">
    <property type="entry name" value="Sod_Fe_C"/>
    <property type="match status" value="1"/>
</dbReference>
<dbReference type="Pfam" id="PF00081">
    <property type="entry name" value="Sod_Fe_N"/>
    <property type="match status" value="1"/>
</dbReference>
<dbReference type="PIRSF" id="PIRSF000349">
    <property type="entry name" value="SODismutase"/>
    <property type="match status" value="1"/>
</dbReference>
<dbReference type="PRINTS" id="PR01703">
    <property type="entry name" value="MNSODISMTASE"/>
</dbReference>
<dbReference type="SUPFAM" id="SSF54719">
    <property type="entry name" value="Fe,Mn superoxide dismutase (SOD), C-terminal domain"/>
    <property type="match status" value="1"/>
</dbReference>
<dbReference type="SUPFAM" id="SSF46609">
    <property type="entry name" value="Fe,Mn superoxide dismutase (SOD), N-terminal domain"/>
    <property type="match status" value="1"/>
</dbReference>
<dbReference type="PROSITE" id="PS00088">
    <property type="entry name" value="SOD_MN"/>
    <property type="match status" value="1"/>
</dbReference>
<reference key="1">
    <citation type="journal article" date="1990" name="J. Biol. Chem.">
        <title>A tetrameric iron superoxide dismutase from the eucaryote Tetrahymena pyriformis.</title>
        <authorList>
            <person name="Barra D."/>
            <person name="Schinina M.E."/>
            <person name="Bossa F."/>
            <person name="Puget K."/>
            <person name="Durosay P."/>
            <person name="Guissani A."/>
            <person name="Michelson A.M."/>
        </authorList>
    </citation>
    <scope>PROTEIN SEQUENCE</scope>
</reference>
<accession>P19666</accession>
<feature type="chain" id="PRO_0000159966" description="Superoxide dismutase [Fe]">
    <location>
        <begin position="1"/>
        <end position="196"/>
    </location>
</feature>
<feature type="binding site" evidence="1">
    <location>
        <position position="20"/>
    </location>
    <ligand>
        <name>Fe cation</name>
        <dbReference type="ChEBI" id="CHEBI:24875"/>
    </ligand>
</feature>
<feature type="binding site" evidence="1">
    <location>
        <position position="68"/>
    </location>
    <ligand>
        <name>Fe cation</name>
        <dbReference type="ChEBI" id="CHEBI:24875"/>
    </ligand>
</feature>
<feature type="binding site" evidence="1">
    <location>
        <position position="157"/>
    </location>
    <ligand>
        <name>Fe cation</name>
        <dbReference type="ChEBI" id="CHEBI:24875"/>
    </ligand>
</feature>
<feature type="binding site" evidence="1">
    <location>
        <position position="161"/>
    </location>
    <ligand>
        <name>Fe cation</name>
        <dbReference type="ChEBI" id="CHEBI:24875"/>
    </ligand>
</feature>
<organism>
    <name type="scientific">Tetrahymena pyriformis</name>
    <dbReference type="NCBI Taxonomy" id="5908"/>
    <lineage>
        <taxon>Eukaryota</taxon>
        <taxon>Sar</taxon>
        <taxon>Alveolata</taxon>
        <taxon>Ciliophora</taxon>
        <taxon>Intramacronucleata</taxon>
        <taxon>Oligohymenophorea</taxon>
        <taxon>Hymenostomatida</taxon>
        <taxon>Tetrahymenina</taxon>
        <taxon>Tetrahymenidae</taxon>
        <taxon>Tetrahymena</taxon>
    </lineage>
</organism>
<protein>
    <recommendedName>
        <fullName>Superoxide dismutase [Fe]</fullName>
        <ecNumber>1.15.1.1</ecNumber>
    </recommendedName>
</protein>